<feature type="chain" id="PRO_1000002498" description="Holliday junction branch migration complex subunit RuvA">
    <location>
        <begin position="1"/>
        <end position="194"/>
    </location>
</feature>
<feature type="region of interest" description="Domain I" evidence="1">
    <location>
        <begin position="1"/>
        <end position="64"/>
    </location>
</feature>
<feature type="region of interest" description="Domain II" evidence="1">
    <location>
        <begin position="65"/>
        <end position="140"/>
    </location>
</feature>
<feature type="region of interest" description="Flexible linker" evidence="1">
    <location>
        <begin position="140"/>
        <end position="143"/>
    </location>
</feature>
<feature type="region of interest" description="Domain III" evidence="1">
    <location>
        <begin position="144"/>
        <end position="194"/>
    </location>
</feature>
<gene>
    <name evidence="1" type="primary">ruvA</name>
    <name type="ordered locus">Neut_0283</name>
</gene>
<name>RUVA_NITEC</name>
<protein>
    <recommendedName>
        <fullName evidence="1">Holliday junction branch migration complex subunit RuvA</fullName>
    </recommendedName>
</protein>
<evidence type="ECO:0000255" key="1">
    <source>
        <dbReference type="HAMAP-Rule" id="MF_00031"/>
    </source>
</evidence>
<proteinExistence type="inferred from homology"/>
<comment type="function">
    <text evidence="1">The RuvA-RuvB-RuvC complex processes Holliday junction (HJ) DNA during genetic recombination and DNA repair, while the RuvA-RuvB complex plays an important role in the rescue of blocked DNA replication forks via replication fork reversal (RFR). RuvA specifically binds to HJ cruciform DNA, conferring on it an open structure. The RuvB hexamer acts as an ATP-dependent pump, pulling dsDNA into and through the RuvAB complex. HJ branch migration allows RuvC to scan DNA until it finds its consensus sequence, where it cleaves and resolves the cruciform DNA.</text>
</comment>
<comment type="subunit">
    <text evidence="1">Homotetramer. Forms an RuvA(8)-RuvB(12)-Holliday junction (HJ) complex. HJ DNA is sandwiched between 2 RuvA tetramers; dsDNA enters through RuvA and exits via RuvB. An RuvB hexamer assembles on each DNA strand where it exits the tetramer. Each RuvB hexamer is contacted by two RuvA subunits (via domain III) on 2 adjacent RuvB subunits; this complex drives branch migration. In the full resolvosome a probable DNA-RuvA(4)-RuvB(12)-RuvC(2) complex forms which resolves the HJ.</text>
</comment>
<comment type="subcellular location">
    <subcellularLocation>
        <location evidence="1">Cytoplasm</location>
    </subcellularLocation>
</comment>
<comment type="domain">
    <text evidence="1">Has three domains with a flexible linker between the domains II and III and assumes an 'L' shape. Domain III is highly mobile and contacts RuvB.</text>
</comment>
<comment type="similarity">
    <text evidence="1">Belongs to the RuvA family.</text>
</comment>
<dbReference type="EMBL" id="CP000450">
    <property type="protein sequence ID" value="ABI58567.1"/>
    <property type="molecule type" value="Genomic_DNA"/>
</dbReference>
<dbReference type="RefSeq" id="WP_011633411.1">
    <property type="nucleotide sequence ID" value="NC_008344.1"/>
</dbReference>
<dbReference type="SMR" id="Q0AJA4"/>
<dbReference type="STRING" id="335283.Neut_0283"/>
<dbReference type="KEGG" id="net:Neut_0283"/>
<dbReference type="eggNOG" id="COG0632">
    <property type="taxonomic scope" value="Bacteria"/>
</dbReference>
<dbReference type="HOGENOM" id="CLU_087936_0_0_4"/>
<dbReference type="OrthoDB" id="5293449at2"/>
<dbReference type="Proteomes" id="UP000001966">
    <property type="component" value="Chromosome"/>
</dbReference>
<dbReference type="GO" id="GO:0005737">
    <property type="term" value="C:cytoplasm"/>
    <property type="evidence" value="ECO:0007669"/>
    <property type="project" value="UniProtKB-SubCell"/>
</dbReference>
<dbReference type="GO" id="GO:0009379">
    <property type="term" value="C:Holliday junction helicase complex"/>
    <property type="evidence" value="ECO:0007669"/>
    <property type="project" value="InterPro"/>
</dbReference>
<dbReference type="GO" id="GO:0048476">
    <property type="term" value="C:Holliday junction resolvase complex"/>
    <property type="evidence" value="ECO:0007669"/>
    <property type="project" value="UniProtKB-UniRule"/>
</dbReference>
<dbReference type="GO" id="GO:0005524">
    <property type="term" value="F:ATP binding"/>
    <property type="evidence" value="ECO:0007669"/>
    <property type="project" value="InterPro"/>
</dbReference>
<dbReference type="GO" id="GO:0000400">
    <property type="term" value="F:four-way junction DNA binding"/>
    <property type="evidence" value="ECO:0007669"/>
    <property type="project" value="UniProtKB-UniRule"/>
</dbReference>
<dbReference type="GO" id="GO:0009378">
    <property type="term" value="F:four-way junction helicase activity"/>
    <property type="evidence" value="ECO:0007669"/>
    <property type="project" value="InterPro"/>
</dbReference>
<dbReference type="GO" id="GO:0006310">
    <property type="term" value="P:DNA recombination"/>
    <property type="evidence" value="ECO:0007669"/>
    <property type="project" value="UniProtKB-UniRule"/>
</dbReference>
<dbReference type="GO" id="GO:0006281">
    <property type="term" value="P:DNA repair"/>
    <property type="evidence" value="ECO:0007669"/>
    <property type="project" value="UniProtKB-UniRule"/>
</dbReference>
<dbReference type="CDD" id="cd14332">
    <property type="entry name" value="UBA_RuvA_C"/>
    <property type="match status" value="1"/>
</dbReference>
<dbReference type="Gene3D" id="1.10.150.20">
    <property type="entry name" value="5' to 3' exonuclease, C-terminal subdomain"/>
    <property type="match status" value="1"/>
</dbReference>
<dbReference type="Gene3D" id="2.40.50.140">
    <property type="entry name" value="Nucleic acid-binding proteins"/>
    <property type="match status" value="1"/>
</dbReference>
<dbReference type="HAMAP" id="MF_00031">
    <property type="entry name" value="DNA_HJ_migration_RuvA"/>
    <property type="match status" value="1"/>
</dbReference>
<dbReference type="InterPro" id="IPR013849">
    <property type="entry name" value="DNA_helicase_Holl-junc_RuvA_I"/>
</dbReference>
<dbReference type="InterPro" id="IPR003583">
    <property type="entry name" value="Hlx-hairpin-Hlx_DNA-bd_motif"/>
</dbReference>
<dbReference type="InterPro" id="IPR012340">
    <property type="entry name" value="NA-bd_OB-fold"/>
</dbReference>
<dbReference type="InterPro" id="IPR000085">
    <property type="entry name" value="RuvA"/>
</dbReference>
<dbReference type="InterPro" id="IPR010994">
    <property type="entry name" value="RuvA_2-like"/>
</dbReference>
<dbReference type="InterPro" id="IPR011114">
    <property type="entry name" value="RuvA_C"/>
</dbReference>
<dbReference type="InterPro" id="IPR036267">
    <property type="entry name" value="RuvA_C_sf"/>
</dbReference>
<dbReference type="NCBIfam" id="TIGR00084">
    <property type="entry name" value="ruvA"/>
    <property type="match status" value="1"/>
</dbReference>
<dbReference type="Pfam" id="PF14520">
    <property type="entry name" value="HHH_5"/>
    <property type="match status" value="1"/>
</dbReference>
<dbReference type="Pfam" id="PF07499">
    <property type="entry name" value="RuvA_C"/>
    <property type="match status" value="1"/>
</dbReference>
<dbReference type="Pfam" id="PF01330">
    <property type="entry name" value="RuvA_N"/>
    <property type="match status" value="1"/>
</dbReference>
<dbReference type="SMART" id="SM00278">
    <property type="entry name" value="HhH1"/>
    <property type="match status" value="2"/>
</dbReference>
<dbReference type="SUPFAM" id="SSF46929">
    <property type="entry name" value="DNA helicase RuvA subunit, C-terminal domain"/>
    <property type="match status" value="1"/>
</dbReference>
<dbReference type="SUPFAM" id="SSF50249">
    <property type="entry name" value="Nucleic acid-binding proteins"/>
    <property type="match status" value="1"/>
</dbReference>
<dbReference type="SUPFAM" id="SSF47781">
    <property type="entry name" value="RuvA domain 2-like"/>
    <property type="match status" value="1"/>
</dbReference>
<accession>Q0AJA4</accession>
<organism>
    <name type="scientific">Nitrosomonas eutropha (strain DSM 101675 / C91 / Nm57)</name>
    <dbReference type="NCBI Taxonomy" id="335283"/>
    <lineage>
        <taxon>Bacteria</taxon>
        <taxon>Pseudomonadati</taxon>
        <taxon>Pseudomonadota</taxon>
        <taxon>Betaproteobacteria</taxon>
        <taxon>Nitrosomonadales</taxon>
        <taxon>Nitrosomonadaceae</taxon>
        <taxon>Nitrosomonas</taxon>
    </lineage>
</organism>
<keyword id="KW-0963">Cytoplasm</keyword>
<keyword id="KW-0227">DNA damage</keyword>
<keyword id="KW-0233">DNA recombination</keyword>
<keyword id="KW-0234">DNA repair</keyword>
<keyword id="KW-0238">DNA-binding</keyword>
<reference key="1">
    <citation type="journal article" date="2007" name="Environ. Microbiol.">
        <title>Whole-genome analysis of the ammonia-oxidizing bacterium, Nitrosomonas eutropha C91: implications for niche adaptation.</title>
        <authorList>
            <person name="Stein L.Y."/>
            <person name="Arp D.J."/>
            <person name="Berube P.M."/>
            <person name="Chain P.S."/>
            <person name="Hauser L."/>
            <person name="Jetten M.S."/>
            <person name="Klotz M.G."/>
            <person name="Larimer F.W."/>
            <person name="Norton J.M."/>
            <person name="Op den Camp H.J.M."/>
            <person name="Shin M."/>
            <person name="Wei X."/>
        </authorList>
    </citation>
    <scope>NUCLEOTIDE SEQUENCE [LARGE SCALE GENOMIC DNA]</scope>
    <source>
        <strain>DSM 101675 / C91 / Nm57</strain>
    </source>
</reference>
<sequence>MIGRITGLLLEKHPPLVLVDVQGTGYEIDVPMSTFCKLPDIGKKVTLHTHFWVREDVHLLFGFMTEQERALFRQLTKISGIGARTGLAILSGLSVTDLHQAVVSQDSIRLTKIPGIGKKTAERLLLELRDKIDPVAILSEAGAAASNVDKDILSALLALGYNGREVNRALEQLSEGVTVSDGIMQSLKFLSKVK</sequence>